<keyword id="KW-0413">Isomerase</keyword>
<keyword id="KW-1185">Reference proteome</keyword>
<proteinExistence type="inferred from homology"/>
<sequence length="296" mass="32229">MTEHSFKQIDVFSNKGFRGNPVAVFFDADNLSQKEMQQIAKWTNLSETTFVQKPTIDKADYRLRIFTPECELSFAGHPTIGSCFAVVESGYCTPKNCKIIQECLAGLVELTIDGEKDEDTWISFKLPYYKILQTSETAISEVENALGIPLNYSSQVSPPVLIDDGPKWLVIQLPNATDVLNLVPKFQSLSQVCKNNDWIGVTVFGELGKDSFESRSFAPLIHVNEDPACGSGAGAVGVYIGSSQKTPTSLSFTISQGTKLSRQAISKVSVDVSSNKSIAVFVGGQAKTCISGKSFI</sequence>
<organism>
    <name type="scientific">Schizosaccharomyces pombe (strain 972 / ATCC 24843)</name>
    <name type="common">Fission yeast</name>
    <dbReference type="NCBI Taxonomy" id="284812"/>
    <lineage>
        <taxon>Eukaryota</taxon>
        <taxon>Fungi</taxon>
        <taxon>Dikarya</taxon>
        <taxon>Ascomycota</taxon>
        <taxon>Taphrinomycotina</taxon>
        <taxon>Schizosaccharomycetes</taxon>
        <taxon>Schizosaccharomycetales</taxon>
        <taxon>Schizosaccharomycetaceae</taxon>
        <taxon>Schizosaccharomyces</taxon>
    </lineage>
</organism>
<gene>
    <name type="primary">aes1</name>
    <name type="ORF">SPBPB21E7.07</name>
</gene>
<dbReference type="EC" id="5.1.-.-"/>
<dbReference type="EMBL" id="CU329671">
    <property type="protein sequence ID" value="CAD31747.1"/>
    <property type="molecule type" value="Genomic_DNA"/>
</dbReference>
<dbReference type="RefSeq" id="NP_001018772.1">
    <property type="nucleotide sequence ID" value="NM_001020947.2"/>
</dbReference>
<dbReference type="SMR" id="Q8NIL3"/>
<dbReference type="BioGRID" id="280253">
    <property type="interactions" value="2"/>
</dbReference>
<dbReference type="FunCoup" id="Q8NIL3">
    <property type="interactions" value="437"/>
</dbReference>
<dbReference type="STRING" id="284812.Q8NIL3"/>
<dbReference type="iPTMnet" id="Q8NIL3"/>
<dbReference type="PaxDb" id="4896-SPBPB21E7.07.1"/>
<dbReference type="EnsemblFungi" id="SPBPB21E7.07.1">
    <property type="protein sequence ID" value="SPBPB21E7.07.1:pep"/>
    <property type="gene ID" value="SPBPB21E7.07"/>
</dbReference>
<dbReference type="GeneID" id="3361177"/>
<dbReference type="KEGG" id="spo:3361177"/>
<dbReference type="PomBase" id="SPBPB21E7.07">
    <property type="gene designation" value="aes1"/>
</dbReference>
<dbReference type="VEuPathDB" id="FungiDB:SPBPB21E7.07"/>
<dbReference type="eggNOG" id="KOG3033">
    <property type="taxonomic scope" value="Eukaryota"/>
</dbReference>
<dbReference type="HOGENOM" id="CLU_048756_0_0_1"/>
<dbReference type="InParanoid" id="Q8NIL3"/>
<dbReference type="OMA" id="AHWTNLS"/>
<dbReference type="PhylomeDB" id="Q8NIL3"/>
<dbReference type="PRO" id="PR:Q8NIL3"/>
<dbReference type="Proteomes" id="UP000002485">
    <property type="component" value="Chromosome II"/>
</dbReference>
<dbReference type="GO" id="GO:0005737">
    <property type="term" value="C:cytoplasm"/>
    <property type="evidence" value="ECO:0000318"/>
    <property type="project" value="GO_Central"/>
</dbReference>
<dbReference type="GO" id="GO:0005829">
    <property type="term" value="C:cytosol"/>
    <property type="evidence" value="ECO:0007005"/>
    <property type="project" value="PomBase"/>
</dbReference>
<dbReference type="GO" id="GO:0005634">
    <property type="term" value="C:nucleus"/>
    <property type="evidence" value="ECO:0007005"/>
    <property type="project" value="PomBase"/>
</dbReference>
<dbReference type="GO" id="GO:0016853">
    <property type="term" value="F:isomerase activity"/>
    <property type="evidence" value="ECO:0000318"/>
    <property type="project" value="GO_Central"/>
</dbReference>
<dbReference type="GO" id="GO:0009058">
    <property type="term" value="P:biosynthetic process"/>
    <property type="evidence" value="ECO:0007669"/>
    <property type="project" value="InterPro"/>
</dbReference>
<dbReference type="GO" id="GO:0031048">
    <property type="term" value="P:regulatory ncRNA-mediated heterochromatin formation"/>
    <property type="evidence" value="ECO:0000315"/>
    <property type="project" value="UniProtKB"/>
</dbReference>
<dbReference type="FunFam" id="3.10.310.10:FF:000026">
    <property type="entry name" value="Uncharacterized isomerase YHI9"/>
    <property type="match status" value="1"/>
</dbReference>
<dbReference type="Gene3D" id="3.10.310.10">
    <property type="entry name" value="Diaminopimelate Epimerase, Chain A, domain 1"/>
    <property type="match status" value="2"/>
</dbReference>
<dbReference type="InterPro" id="IPR003719">
    <property type="entry name" value="Phenazine_PhzF-like"/>
</dbReference>
<dbReference type="NCBIfam" id="TIGR00654">
    <property type="entry name" value="PhzF_family"/>
    <property type="match status" value="1"/>
</dbReference>
<dbReference type="PANTHER" id="PTHR13774:SF32">
    <property type="entry name" value="ANTISENSE-ENHANCING SEQUENCE 1"/>
    <property type="match status" value="1"/>
</dbReference>
<dbReference type="PANTHER" id="PTHR13774">
    <property type="entry name" value="PHENAZINE BIOSYNTHESIS PROTEIN"/>
    <property type="match status" value="1"/>
</dbReference>
<dbReference type="Pfam" id="PF02567">
    <property type="entry name" value="PhzC-PhzF"/>
    <property type="match status" value="1"/>
</dbReference>
<dbReference type="PIRSF" id="PIRSF016184">
    <property type="entry name" value="PhzC_PhzF"/>
    <property type="match status" value="1"/>
</dbReference>
<dbReference type="SUPFAM" id="SSF54506">
    <property type="entry name" value="Diaminopimelate epimerase-like"/>
    <property type="match status" value="1"/>
</dbReference>
<protein>
    <recommendedName>
        <fullName>Antisense-enhancing sequence 1</fullName>
        <ecNumber>5.1.-.-</ecNumber>
    </recommendedName>
    <alternativeName>
        <fullName>AES factor 1</fullName>
    </alternativeName>
</protein>
<feature type="chain" id="PRO_0000162386" description="Antisense-enhancing sequence 1">
    <location>
        <begin position="1"/>
        <end position="296"/>
    </location>
</feature>
<feature type="active site" evidence="1">
    <location>
        <position position="47"/>
    </location>
</feature>
<accession>Q8NIL3</accession>
<name>AES1_SCHPO</name>
<reference evidence="3" key="1">
    <citation type="journal article" date="2002" name="Nucleic Acids Res.">
        <title>Dominant genetic screen for cofactors that enhance antisense RNA-mediated gene silencing in fission yeast.</title>
        <authorList>
            <person name="Raponi M."/>
            <person name="Arndt G.M."/>
        </authorList>
    </citation>
    <scope>NUCLEOTIDE SEQUENCE [GENOMIC DNA]</scope>
    <scope>FUNCTION</scope>
</reference>
<reference evidence="3" key="2">
    <citation type="journal article" date="2002" name="Nature">
        <title>The genome sequence of Schizosaccharomyces pombe.</title>
        <authorList>
            <person name="Wood V."/>
            <person name="Gwilliam R."/>
            <person name="Rajandream M.A."/>
            <person name="Lyne M.H."/>
            <person name="Lyne R."/>
            <person name="Stewart A."/>
            <person name="Sgouros J.G."/>
            <person name="Peat N."/>
            <person name="Hayles J."/>
            <person name="Baker S.G."/>
            <person name="Basham D."/>
            <person name="Bowman S."/>
            <person name="Brooks K."/>
            <person name="Brown D."/>
            <person name="Brown S."/>
            <person name="Chillingworth T."/>
            <person name="Churcher C.M."/>
            <person name="Collins M."/>
            <person name="Connor R."/>
            <person name="Cronin A."/>
            <person name="Davis P."/>
            <person name="Feltwell T."/>
            <person name="Fraser A."/>
            <person name="Gentles S."/>
            <person name="Goble A."/>
            <person name="Hamlin N."/>
            <person name="Harris D.E."/>
            <person name="Hidalgo J."/>
            <person name="Hodgson G."/>
            <person name="Holroyd S."/>
            <person name="Hornsby T."/>
            <person name="Howarth S."/>
            <person name="Huckle E.J."/>
            <person name="Hunt S."/>
            <person name="Jagels K."/>
            <person name="James K.D."/>
            <person name="Jones L."/>
            <person name="Jones M."/>
            <person name="Leather S."/>
            <person name="McDonald S."/>
            <person name="McLean J."/>
            <person name="Mooney P."/>
            <person name="Moule S."/>
            <person name="Mungall K.L."/>
            <person name="Murphy L.D."/>
            <person name="Niblett D."/>
            <person name="Odell C."/>
            <person name="Oliver K."/>
            <person name="O'Neil S."/>
            <person name="Pearson D."/>
            <person name="Quail M.A."/>
            <person name="Rabbinowitsch E."/>
            <person name="Rutherford K.M."/>
            <person name="Rutter S."/>
            <person name="Saunders D."/>
            <person name="Seeger K."/>
            <person name="Sharp S."/>
            <person name="Skelton J."/>
            <person name="Simmonds M.N."/>
            <person name="Squares R."/>
            <person name="Squares S."/>
            <person name="Stevens K."/>
            <person name="Taylor K."/>
            <person name="Taylor R.G."/>
            <person name="Tivey A."/>
            <person name="Walsh S.V."/>
            <person name="Warren T."/>
            <person name="Whitehead S."/>
            <person name="Woodward J.R."/>
            <person name="Volckaert G."/>
            <person name="Aert R."/>
            <person name="Robben J."/>
            <person name="Grymonprez B."/>
            <person name="Weltjens I."/>
            <person name="Vanstreels E."/>
            <person name="Rieger M."/>
            <person name="Schaefer M."/>
            <person name="Mueller-Auer S."/>
            <person name="Gabel C."/>
            <person name="Fuchs M."/>
            <person name="Duesterhoeft A."/>
            <person name="Fritzc C."/>
            <person name="Holzer E."/>
            <person name="Moestl D."/>
            <person name="Hilbert H."/>
            <person name="Borzym K."/>
            <person name="Langer I."/>
            <person name="Beck A."/>
            <person name="Lehrach H."/>
            <person name="Reinhardt R."/>
            <person name="Pohl T.M."/>
            <person name="Eger P."/>
            <person name="Zimmermann W."/>
            <person name="Wedler H."/>
            <person name="Wambutt R."/>
            <person name="Purnelle B."/>
            <person name="Goffeau A."/>
            <person name="Cadieu E."/>
            <person name="Dreano S."/>
            <person name="Gloux S."/>
            <person name="Lelaure V."/>
            <person name="Mottier S."/>
            <person name="Galibert F."/>
            <person name="Aves S.J."/>
            <person name="Xiang Z."/>
            <person name="Hunt C."/>
            <person name="Moore K."/>
            <person name="Hurst S.M."/>
            <person name="Lucas M."/>
            <person name="Rochet M."/>
            <person name="Gaillardin C."/>
            <person name="Tallada V.A."/>
            <person name="Garzon A."/>
            <person name="Thode G."/>
            <person name="Daga R.R."/>
            <person name="Cruzado L."/>
            <person name="Jimenez J."/>
            <person name="Sanchez M."/>
            <person name="del Rey F."/>
            <person name="Benito J."/>
            <person name="Dominguez A."/>
            <person name="Revuelta J.L."/>
            <person name="Moreno S."/>
            <person name="Armstrong J."/>
            <person name="Forsburg S.L."/>
            <person name="Cerutti L."/>
            <person name="Lowe T."/>
            <person name="McCombie W.R."/>
            <person name="Paulsen I."/>
            <person name="Potashkin J."/>
            <person name="Shpakovski G.V."/>
            <person name="Ussery D."/>
            <person name="Barrell B.G."/>
            <person name="Nurse P."/>
        </authorList>
    </citation>
    <scope>NUCLEOTIDE SEQUENCE [LARGE SCALE GENOMIC DNA]</scope>
    <source>
        <strain>972 / ATCC 24843</strain>
    </source>
</reference>
<comment type="function">
    <text evidence="1 2">May have isomerase activity (By similarity). Enhances target gene silencing when coexpressed with antisense RNA.</text>
</comment>
<comment type="similarity">
    <text evidence="3">Belongs to the PhzF family.</text>
</comment>
<evidence type="ECO:0000250" key="1"/>
<evidence type="ECO:0000269" key="2">
    <source>
    </source>
</evidence>
<evidence type="ECO:0000305" key="3"/>